<reference key="1">
    <citation type="submission" date="2006-12" db="EMBL/GenBank/DDBJ databases">
        <title>Complete sequence of Mycobacterium vanbaalenii PYR-1.</title>
        <authorList>
            <consortium name="US DOE Joint Genome Institute"/>
            <person name="Copeland A."/>
            <person name="Lucas S."/>
            <person name="Lapidus A."/>
            <person name="Barry K."/>
            <person name="Detter J.C."/>
            <person name="Glavina del Rio T."/>
            <person name="Hammon N."/>
            <person name="Israni S."/>
            <person name="Dalin E."/>
            <person name="Tice H."/>
            <person name="Pitluck S."/>
            <person name="Singan V."/>
            <person name="Schmutz J."/>
            <person name="Larimer F."/>
            <person name="Land M."/>
            <person name="Hauser L."/>
            <person name="Kyrpides N."/>
            <person name="Anderson I.J."/>
            <person name="Miller C."/>
            <person name="Richardson P."/>
        </authorList>
    </citation>
    <scope>NUCLEOTIDE SEQUENCE [LARGE SCALE GENOMIC DNA]</scope>
    <source>
        <strain>DSM 7251 / JCM 13017 / BCRC 16820 / KCTC 9966 / NRRL B-24157 / PYR-1</strain>
    </source>
</reference>
<gene>
    <name evidence="1" type="primary">argH</name>
    <name type="ordered locus">Mvan_3307</name>
</gene>
<comment type="catalytic activity">
    <reaction evidence="1">
        <text>2-(N(omega)-L-arginino)succinate = fumarate + L-arginine</text>
        <dbReference type="Rhea" id="RHEA:24020"/>
        <dbReference type="ChEBI" id="CHEBI:29806"/>
        <dbReference type="ChEBI" id="CHEBI:32682"/>
        <dbReference type="ChEBI" id="CHEBI:57472"/>
        <dbReference type="EC" id="4.3.2.1"/>
    </reaction>
</comment>
<comment type="pathway">
    <text evidence="1">Amino-acid biosynthesis; L-arginine biosynthesis; L-arginine from L-ornithine and carbamoyl phosphate: step 3/3.</text>
</comment>
<comment type="subcellular location">
    <subcellularLocation>
        <location evidence="1">Cytoplasm</location>
    </subcellularLocation>
</comment>
<comment type="similarity">
    <text evidence="1">Belongs to the lyase 1 family. Argininosuccinate lyase subfamily.</text>
</comment>
<name>ARLY_MYCVP</name>
<evidence type="ECO:0000255" key="1">
    <source>
        <dbReference type="HAMAP-Rule" id="MF_00006"/>
    </source>
</evidence>
<organism>
    <name type="scientific">Mycolicibacterium vanbaalenii (strain DSM 7251 / JCM 13017 / BCRC 16820 / KCTC 9966 / NRRL B-24157 / PYR-1)</name>
    <name type="common">Mycobacterium vanbaalenii</name>
    <dbReference type="NCBI Taxonomy" id="350058"/>
    <lineage>
        <taxon>Bacteria</taxon>
        <taxon>Bacillati</taxon>
        <taxon>Actinomycetota</taxon>
        <taxon>Actinomycetes</taxon>
        <taxon>Mycobacteriales</taxon>
        <taxon>Mycobacteriaceae</taxon>
        <taxon>Mycolicibacterium</taxon>
    </lineage>
</organism>
<keyword id="KW-0028">Amino-acid biosynthesis</keyword>
<keyword id="KW-0055">Arginine biosynthesis</keyword>
<keyword id="KW-0963">Cytoplasm</keyword>
<keyword id="KW-0456">Lyase</keyword>
<sequence>MSTNEGSLWGGRFADGPADALAALSKSTHFDWVLAPYDVVASKAHARVLFRAGLLTEEQRDGLLAGLDSLGSDVADGSFGPLVSDEDVHGALERGLIDRVGADLGGRLRAGRSRNDQVATLFRLWLRDAIRRVADGVLEVVAALATQAAAHPTAIMPGKTHLQSAQPVLLAHHLLAHAHPLLRDVDRLADFDKRAAVSPYGSGALAGSSLGLDPDAIAEELGFAAAADNSIDATASRDFAAEAAFVFSMIGVDLSRLAEDIILWSTTEFGYVTLHDAWSTGSSIMPQKKNPDIAELARGKSGRLIGNLAGLLATLKAQPLAYNRDLQEDKEPVFDSVAQLELLLPAMAGLVGTLRFDVDRMAELAPLGYTLATDVAEWLVRRGVPFRVAHEAAGAAVRAAEARGIGLEDLADAELTGIHPQLTADVREVLTTEGSVNSRDARGGTAPTQVARQLSAVRDTSERFRVRLRR</sequence>
<accession>A1TAA5</accession>
<dbReference type="EC" id="4.3.2.1" evidence="1"/>
<dbReference type="EMBL" id="CP000511">
    <property type="protein sequence ID" value="ABM14105.1"/>
    <property type="molecule type" value="Genomic_DNA"/>
</dbReference>
<dbReference type="RefSeq" id="WP_011780510.1">
    <property type="nucleotide sequence ID" value="NZ_JACKSD010000031.1"/>
</dbReference>
<dbReference type="SMR" id="A1TAA5"/>
<dbReference type="STRING" id="350058.Mvan_3307"/>
<dbReference type="KEGG" id="mva:Mvan_3307"/>
<dbReference type="eggNOG" id="COG0165">
    <property type="taxonomic scope" value="Bacteria"/>
</dbReference>
<dbReference type="HOGENOM" id="CLU_027272_2_2_11"/>
<dbReference type="UniPathway" id="UPA00068">
    <property type="reaction ID" value="UER00114"/>
</dbReference>
<dbReference type="Proteomes" id="UP000009159">
    <property type="component" value="Chromosome"/>
</dbReference>
<dbReference type="GO" id="GO:0005829">
    <property type="term" value="C:cytosol"/>
    <property type="evidence" value="ECO:0007669"/>
    <property type="project" value="TreeGrafter"/>
</dbReference>
<dbReference type="GO" id="GO:0004056">
    <property type="term" value="F:argininosuccinate lyase activity"/>
    <property type="evidence" value="ECO:0007669"/>
    <property type="project" value="UniProtKB-UniRule"/>
</dbReference>
<dbReference type="GO" id="GO:0042450">
    <property type="term" value="P:arginine biosynthetic process via ornithine"/>
    <property type="evidence" value="ECO:0007669"/>
    <property type="project" value="InterPro"/>
</dbReference>
<dbReference type="GO" id="GO:0006526">
    <property type="term" value="P:L-arginine biosynthetic process"/>
    <property type="evidence" value="ECO:0007669"/>
    <property type="project" value="UniProtKB-UniRule"/>
</dbReference>
<dbReference type="CDD" id="cd01359">
    <property type="entry name" value="Argininosuccinate_lyase"/>
    <property type="match status" value="1"/>
</dbReference>
<dbReference type="FunFam" id="1.10.40.30:FF:000001">
    <property type="entry name" value="Argininosuccinate lyase"/>
    <property type="match status" value="1"/>
</dbReference>
<dbReference type="FunFam" id="1.20.200.10:FF:000015">
    <property type="entry name" value="argininosuccinate lyase isoform X2"/>
    <property type="match status" value="1"/>
</dbReference>
<dbReference type="Gene3D" id="1.10.40.30">
    <property type="entry name" value="Fumarase/aspartase (C-terminal domain)"/>
    <property type="match status" value="1"/>
</dbReference>
<dbReference type="Gene3D" id="1.20.200.10">
    <property type="entry name" value="Fumarase/aspartase (Central domain)"/>
    <property type="match status" value="1"/>
</dbReference>
<dbReference type="Gene3D" id="1.10.275.10">
    <property type="entry name" value="Fumarase/aspartase (N-terminal domain)"/>
    <property type="match status" value="1"/>
</dbReference>
<dbReference type="HAMAP" id="MF_00006">
    <property type="entry name" value="Arg_succ_lyase"/>
    <property type="match status" value="1"/>
</dbReference>
<dbReference type="InterPro" id="IPR029419">
    <property type="entry name" value="Arg_succ_lyase_C"/>
</dbReference>
<dbReference type="InterPro" id="IPR009049">
    <property type="entry name" value="Argininosuccinate_lyase"/>
</dbReference>
<dbReference type="InterPro" id="IPR024083">
    <property type="entry name" value="Fumarase/histidase_N"/>
</dbReference>
<dbReference type="InterPro" id="IPR020557">
    <property type="entry name" value="Fumarate_lyase_CS"/>
</dbReference>
<dbReference type="InterPro" id="IPR000362">
    <property type="entry name" value="Fumarate_lyase_fam"/>
</dbReference>
<dbReference type="InterPro" id="IPR022761">
    <property type="entry name" value="Fumarate_lyase_N"/>
</dbReference>
<dbReference type="InterPro" id="IPR008948">
    <property type="entry name" value="L-Aspartase-like"/>
</dbReference>
<dbReference type="NCBIfam" id="TIGR00838">
    <property type="entry name" value="argH"/>
    <property type="match status" value="1"/>
</dbReference>
<dbReference type="PANTHER" id="PTHR43814">
    <property type="entry name" value="ARGININOSUCCINATE LYASE"/>
    <property type="match status" value="1"/>
</dbReference>
<dbReference type="PANTHER" id="PTHR43814:SF1">
    <property type="entry name" value="ARGININOSUCCINATE LYASE"/>
    <property type="match status" value="1"/>
</dbReference>
<dbReference type="Pfam" id="PF14698">
    <property type="entry name" value="ASL_C2"/>
    <property type="match status" value="1"/>
</dbReference>
<dbReference type="Pfam" id="PF00206">
    <property type="entry name" value="Lyase_1"/>
    <property type="match status" value="1"/>
</dbReference>
<dbReference type="PRINTS" id="PR00145">
    <property type="entry name" value="ARGSUCLYASE"/>
</dbReference>
<dbReference type="PRINTS" id="PR00149">
    <property type="entry name" value="FUMRATELYASE"/>
</dbReference>
<dbReference type="SUPFAM" id="SSF48557">
    <property type="entry name" value="L-aspartase-like"/>
    <property type="match status" value="1"/>
</dbReference>
<dbReference type="PROSITE" id="PS00163">
    <property type="entry name" value="FUMARATE_LYASES"/>
    <property type="match status" value="1"/>
</dbReference>
<protein>
    <recommendedName>
        <fullName evidence="1">Argininosuccinate lyase</fullName>
        <shortName evidence="1">ASAL</shortName>
        <ecNumber evidence="1">4.3.2.1</ecNumber>
    </recommendedName>
    <alternativeName>
        <fullName evidence="1">Arginosuccinase</fullName>
    </alternativeName>
</protein>
<proteinExistence type="inferred from homology"/>
<feature type="chain" id="PRO_1000000512" description="Argininosuccinate lyase">
    <location>
        <begin position="1"/>
        <end position="470"/>
    </location>
</feature>